<feature type="chain" id="PRO_0000280354" description="Photoreceptor disk component PRCD" evidence="3">
    <location>
        <begin position="1"/>
        <end position="53"/>
    </location>
</feature>
<feature type="region of interest" description="Disordered" evidence="4">
    <location>
        <begin position="24"/>
        <end position="53"/>
    </location>
</feature>
<feature type="compositionally biased region" description="Polar residues" evidence="4">
    <location>
        <begin position="35"/>
        <end position="45"/>
    </location>
</feature>
<feature type="lipid moiety-binding region" description="S-palmitoyl cysteine" evidence="6 9">
    <location>
        <position position="2"/>
    </location>
</feature>
<feature type="mutagenesis site" description="Loss of N-terminal lipidation. Fails to localize to the photoreceptor outer segment." evidence="6">
    <original>C</original>
    <variation>Y</variation>
    <location>
        <position position="2"/>
    </location>
</feature>
<reference key="1">
    <citation type="journal article" date="2006" name="Genomics">
        <title>Identical mutation in a novel retinal gene causes progressive rod-cone degeneration in dogs and retinitis pigmentosa in humans.</title>
        <authorList>
            <person name="Zangerl B."/>
            <person name="Goldstein O."/>
            <person name="Philp A.R."/>
            <person name="Lindauer S.J.P."/>
            <person name="Pearce-Kelling S.E."/>
            <person name="Mullins R.F."/>
            <person name="Graphodatsky A.S."/>
            <person name="Ripoll D."/>
            <person name="Felix J.S."/>
            <person name="Stone E.M."/>
            <person name="Acland G.M."/>
            <person name="Aguirre G.D."/>
        </authorList>
    </citation>
    <scope>NUCLEOTIDE SEQUENCE [MRNA]</scope>
    <source>
        <strain>C57BL/6J</strain>
    </source>
</reference>
<reference key="2">
    <citation type="journal article" date="2013" name="J. Proteome Res.">
        <title>Proteomic identification of unique photoreceptor disc components reveals the presence of PRCD, a protein linked to retinal degeneration.</title>
        <authorList>
            <person name="Skiba N.P."/>
            <person name="Spencer W.J."/>
            <person name="Salinas R.Y."/>
            <person name="Lieu E.C."/>
            <person name="Thompson J.W."/>
            <person name="Arshavsky V.Y."/>
        </authorList>
    </citation>
    <scope>SUBCELLULAR LOCATION</scope>
    <scope>TISSUE SPECIFICITY</scope>
</reference>
<reference key="3">
    <citation type="journal article" date="2016" name="Biochemistry">
        <title>Progressive Rod-Cone Degeneration (PRCD) Protein Requires N-Terminal S-Acylation and Rhodopsin Binding for Photoreceptor Outer Segment Localization and Maintaining Intracellular Stability.</title>
        <authorList>
            <person name="Spencer W.J."/>
            <person name="Pearring J.N."/>
            <person name="Salinas R.Y."/>
            <person name="Loiselle D.R."/>
            <person name="Skiba N.P."/>
            <person name="Arshavsky V.Y."/>
        </authorList>
    </citation>
    <scope>INTERACTION WITH RHO</scope>
    <scope>SUBCELLULAR LOCATION</scope>
    <scope>TISSUE SPECIFICITY</scope>
    <scope>PALMITOYLATION AT CYS-2</scope>
    <scope>MUTAGENESIS OF CYS-2</scope>
</reference>
<reference key="4">
    <citation type="journal article" date="2016" name="J. Biol. Chem.">
        <title>Palmitoylation of Progressive Rod-Cone Degeneration (PRCD) Regulates Protein Stability and Localization.</title>
        <authorList>
            <person name="Murphy J."/>
            <person name="Kolandaivelu S."/>
        </authorList>
    </citation>
    <scope>SUBCELLULAR LOCATION</scope>
    <scope>TISSUE SPECIFICITY</scope>
</reference>
<name>PRCD_MOUSE</name>
<accession>Q00LT2</accession>
<protein>
    <recommendedName>
        <fullName evidence="10">Photoreceptor disk component PRCD</fullName>
    </recommendedName>
    <alternativeName>
        <fullName evidence="2">Progressive rod-cone degeneration protein homolog</fullName>
    </alternativeName>
</protein>
<dbReference type="EMBL" id="DQ390337">
    <property type="protein sequence ID" value="ABD17428.1"/>
    <property type="molecule type" value="mRNA"/>
</dbReference>
<dbReference type="CCDS" id="CCDS48987.1"/>
<dbReference type="RefSeq" id="NP_001156790.1">
    <property type="nucleotide sequence ID" value="NM_001163318.1"/>
</dbReference>
<dbReference type="FunCoup" id="Q00LT2">
    <property type="interactions" value="11"/>
</dbReference>
<dbReference type="STRING" id="10090.ENSMUSP00000119671"/>
<dbReference type="PhosphoSitePlus" id="Q00LT2"/>
<dbReference type="SwissPalm" id="Q00LT2"/>
<dbReference type="ProteomicsDB" id="289834"/>
<dbReference type="Ensembl" id="ENSMUST00000116318.3">
    <property type="protein sequence ID" value="ENSMUSP00000112020.3"/>
    <property type="gene ID" value="ENSMUSG00000075410.15"/>
</dbReference>
<dbReference type="Ensembl" id="ENSMUST00000148484.9">
    <property type="protein sequence ID" value="ENSMUSP00000119671.3"/>
    <property type="gene ID" value="ENSMUSG00000075410.15"/>
</dbReference>
<dbReference type="GeneID" id="100038570"/>
<dbReference type="KEGG" id="mmu:100038570"/>
<dbReference type="UCSC" id="uc007mlx.2">
    <property type="organism name" value="mouse"/>
</dbReference>
<dbReference type="AGR" id="MGI:3649529"/>
<dbReference type="CTD" id="768206"/>
<dbReference type="MGI" id="MGI:3649529">
    <property type="gene designation" value="Prcd"/>
</dbReference>
<dbReference type="VEuPathDB" id="HostDB:ENSMUSG00000075410"/>
<dbReference type="GeneTree" id="ENSGT00520000058096"/>
<dbReference type="HOGENOM" id="CLU_3175255_0_0_1"/>
<dbReference type="InParanoid" id="Q00LT2"/>
<dbReference type="OMA" id="CRRRFAN"/>
<dbReference type="OrthoDB" id="9609893at2759"/>
<dbReference type="BioGRID-ORCS" id="100038570">
    <property type="hits" value="2 hits in 64 CRISPR screens"/>
</dbReference>
<dbReference type="ChiTaRS" id="Prcd">
    <property type="organism name" value="mouse"/>
</dbReference>
<dbReference type="PRO" id="PR:Q00LT2"/>
<dbReference type="Proteomes" id="UP000000589">
    <property type="component" value="Chromosome 11"/>
</dbReference>
<dbReference type="RNAct" id="Q00LT2">
    <property type="molecule type" value="protein"/>
</dbReference>
<dbReference type="Bgee" id="ENSMUSG00000075410">
    <property type="expression patterns" value="Expressed in retinal neural layer and 96 other cell types or tissues"/>
</dbReference>
<dbReference type="ExpressionAtlas" id="Q00LT2">
    <property type="expression patterns" value="baseline and differential"/>
</dbReference>
<dbReference type="GO" id="GO:0005737">
    <property type="term" value="C:cytoplasm"/>
    <property type="evidence" value="ECO:0000250"/>
    <property type="project" value="UniProtKB"/>
</dbReference>
<dbReference type="GO" id="GO:0005783">
    <property type="term" value="C:endoplasmic reticulum"/>
    <property type="evidence" value="ECO:0000250"/>
    <property type="project" value="UniProtKB"/>
</dbReference>
<dbReference type="GO" id="GO:0005576">
    <property type="term" value="C:extracellular region"/>
    <property type="evidence" value="ECO:0000250"/>
    <property type="project" value="UniProtKB"/>
</dbReference>
<dbReference type="GO" id="GO:0005794">
    <property type="term" value="C:Golgi apparatus"/>
    <property type="evidence" value="ECO:0000250"/>
    <property type="project" value="UniProtKB"/>
</dbReference>
<dbReference type="GO" id="GO:0001750">
    <property type="term" value="C:photoreceptor outer segment"/>
    <property type="evidence" value="ECO:0000314"/>
    <property type="project" value="HGNC"/>
</dbReference>
<dbReference type="GO" id="GO:0042622">
    <property type="term" value="C:photoreceptor outer segment membrane"/>
    <property type="evidence" value="ECO:0000314"/>
    <property type="project" value="UniProtKB"/>
</dbReference>
<dbReference type="GO" id="GO:0002046">
    <property type="term" value="F:opsin binding"/>
    <property type="evidence" value="ECO:0000353"/>
    <property type="project" value="UniProtKB"/>
</dbReference>
<dbReference type="GO" id="GO:0050908">
    <property type="term" value="P:detection of light stimulus involved in visual perception"/>
    <property type="evidence" value="ECO:0000304"/>
    <property type="project" value="MGI"/>
</dbReference>
<dbReference type="InterPro" id="IPR027937">
    <property type="entry name" value="PRCD"/>
</dbReference>
<dbReference type="PANTHER" id="PTHR38501">
    <property type="entry name" value="PHOTORECEPTOR DISK COMPONENT PRCD"/>
    <property type="match status" value="1"/>
</dbReference>
<dbReference type="PANTHER" id="PTHR38501:SF1">
    <property type="entry name" value="PHOTORECEPTOR DISK COMPONENT PRCD"/>
    <property type="match status" value="1"/>
</dbReference>
<dbReference type="Pfam" id="PF15201">
    <property type="entry name" value="Rod_cone_degen"/>
    <property type="match status" value="1"/>
</dbReference>
<comment type="function">
    <text evidence="2">Involved in vision.</text>
</comment>
<comment type="subunit">
    <text evidence="6">Interacts with RHO/rhodopsin; the interaction promotes PRCD stability.</text>
</comment>
<comment type="subcellular location">
    <subcellularLocation>
        <location evidence="5 6 7">Cell projection</location>
        <location evidence="5 6 7">Cilium</location>
        <location evidence="5 6 7">Photoreceptor outer segment</location>
    </subcellularLocation>
    <subcellularLocation>
        <location evidence="6 7">Membrane</location>
        <topology evidence="6">Lipid-anchor</topology>
        <orientation evidence="6">Cytoplasmic side</orientation>
    </subcellularLocation>
    <subcellularLocation>
        <location evidence="2">Endoplasmic reticulum</location>
    </subcellularLocation>
    <subcellularLocation>
        <location evidence="2">Golgi apparatus</location>
    </subcellularLocation>
    <text evidence="6">Localizes to photoreceptor disk membranes in the photoreceptor outer segment.</text>
</comment>
<comment type="tissue specificity">
    <text evidence="5 6 7">Expressed in retina, where it localizes to both rod and cone photoreceptors (at protein level).</text>
</comment>
<comment type="PTM">
    <text evidence="2 6">Palmitoylated at Cys-2 (PubMed:27509380). Palmitoylation is essential for protein stability and trafficking to the photoreceptor outer segment, but does not appear to be essential for membrane localization (PubMed:27509380). Probably palmitoylated by ZDHHC3 (By similarity).</text>
</comment>
<comment type="PTM">
    <text evidence="1">Phosphorylated.</text>
</comment>
<comment type="similarity">
    <text evidence="8">Belongs to the PRCD family.</text>
</comment>
<gene>
    <name evidence="10" type="primary">Prcd</name>
    <name type="synonym">Gm11744</name>
</gene>
<sequence length="53" mass="5931">MCTTLFLFSLAMLWRRRFTNRVEPEPSRVDGTVVGSGSDTDLQSTGREKGPVK</sequence>
<proteinExistence type="evidence at protein level"/>
<organism>
    <name type="scientific">Mus musculus</name>
    <name type="common">Mouse</name>
    <dbReference type="NCBI Taxonomy" id="10090"/>
    <lineage>
        <taxon>Eukaryota</taxon>
        <taxon>Metazoa</taxon>
        <taxon>Chordata</taxon>
        <taxon>Craniata</taxon>
        <taxon>Vertebrata</taxon>
        <taxon>Euteleostomi</taxon>
        <taxon>Mammalia</taxon>
        <taxon>Eutheria</taxon>
        <taxon>Euarchontoglires</taxon>
        <taxon>Glires</taxon>
        <taxon>Rodentia</taxon>
        <taxon>Myomorpha</taxon>
        <taxon>Muroidea</taxon>
        <taxon>Muridae</taxon>
        <taxon>Murinae</taxon>
        <taxon>Mus</taxon>
        <taxon>Mus</taxon>
    </lineage>
</organism>
<evidence type="ECO:0000250" key="1">
    <source>
        <dbReference type="UniProtKB" id="E1B7R9"/>
    </source>
</evidence>
<evidence type="ECO:0000250" key="2">
    <source>
        <dbReference type="UniProtKB" id="Q00LT1"/>
    </source>
</evidence>
<evidence type="ECO:0000255" key="3"/>
<evidence type="ECO:0000256" key="4">
    <source>
        <dbReference type="SAM" id="MobiDB-lite"/>
    </source>
</evidence>
<evidence type="ECO:0000269" key="5">
    <source>
    </source>
</evidence>
<evidence type="ECO:0000269" key="6">
    <source>
    </source>
</evidence>
<evidence type="ECO:0000269" key="7">
    <source>
    </source>
</evidence>
<evidence type="ECO:0000305" key="8"/>
<evidence type="ECO:0000305" key="9">
    <source>
    </source>
</evidence>
<evidence type="ECO:0000312" key="10">
    <source>
        <dbReference type="MGI" id="MGI:3649529"/>
    </source>
</evidence>
<keyword id="KW-0966">Cell projection</keyword>
<keyword id="KW-0256">Endoplasmic reticulum</keyword>
<keyword id="KW-0333">Golgi apparatus</keyword>
<keyword id="KW-0449">Lipoprotein</keyword>
<keyword id="KW-0472">Membrane</keyword>
<keyword id="KW-0564">Palmitate</keyword>
<keyword id="KW-1185">Reference proteome</keyword>
<keyword id="KW-0716">Sensory transduction</keyword>
<keyword id="KW-0844">Vision</keyword>